<gene>
    <name type="primary">CDH4</name>
</gene>
<dbReference type="EMBL" id="D14459">
    <property type="protein sequence ID" value="BAA03356.1"/>
    <property type="molecule type" value="mRNA"/>
</dbReference>
<dbReference type="PIR" id="JH0424">
    <property type="entry name" value="IJCHCR"/>
</dbReference>
<dbReference type="RefSeq" id="NP_001004391.1">
    <property type="nucleotide sequence ID" value="NM_001004391.2"/>
</dbReference>
<dbReference type="SMR" id="P24503"/>
<dbReference type="FunCoup" id="P24503">
    <property type="interactions" value="139"/>
</dbReference>
<dbReference type="STRING" id="9031.ENSGALP00000055034"/>
<dbReference type="GlyCosmos" id="P24503">
    <property type="glycosylation" value="6 sites, No reported glycans"/>
</dbReference>
<dbReference type="GlyGen" id="P24503">
    <property type="glycosylation" value="6 sites"/>
</dbReference>
<dbReference type="PaxDb" id="9031-ENSGALP00000008166"/>
<dbReference type="GeneID" id="419222"/>
<dbReference type="KEGG" id="gga:419222"/>
<dbReference type="CTD" id="1002"/>
<dbReference type="VEuPathDB" id="HostDB:geneid_419222"/>
<dbReference type="eggNOG" id="KOG3594">
    <property type="taxonomic scope" value="Eukaryota"/>
</dbReference>
<dbReference type="InParanoid" id="P24503"/>
<dbReference type="OMA" id="QICERPG"/>
<dbReference type="OrthoDB" id="6079678at2759"/>
<dbReference type="PhylomeDB" id="P24503"/>
<dbReference type="PRO" id="PR:P24503"/>
<dbReference type="Proteomes" id="UP000000539">
    <property type="component" value="Unassembled WGS sequence"/>
</dbReference>
<dbReference type="GO" id="GO:0005912">
    <property type="term" value="C:adherens junction"/>
    <property type="evidence" value="ECO:0000318"/>
    <property type="project" value="GO_Central"/>
</dbReference>
<dbReference type="GO" id="GO:0016342">
    <property type="term" value="C:catenin complex"/>
    <property type="evidence" value="ECO:0000318"/>
    <property type="project" value="GO_Central"/>
</dbReference>
<dbReference type="GO" id="GO:0008013">
    <property type="term" value="F:beta-catenin binding"/>
    <property type="evidence" value="ECO:0000318"/>
    <property type="project" value="GO_Central"/>
</dbReference>
<dbReference type="GO" id="GO:0045296">
    <property type="term" value="F:cadherin binding"/>
    <property type="evidence" value="ECO:0000318"/>
    <property type="project" value="GO_Central"/>
</dbReference>
<dbReference type="GO" id="GO:0005509">
    <property type="term" value="F:calcium ion binding"/>
    <property type="evidence" value="ECO:0007669"/>
    <property type="project" value="InterPro"/>
</dbReference>
<dbReference type="GO" id="GO:0034332">
    <property type="term" value="P:adherens junction organization"/>
    <property type="evidence" value="ECO:0000318"/>
    <property type="project" value="GO_Central"/>
</dbReference>
<dbReference type="GO" id="GO:0016339">
    <property type="term" value="P:calcium-dependent cell-cell adhesion via plasma membrane cell adhesion molecules"/>
    <property type="evidence" value="ECO:0000318"/>
    <property type="project" value="GO_Central"/>
</dbReference>
<dbReference type="GO" id="GO:0016477">
    <property type="term" value="P:cell migration"/>
    <property type="evidence" value="ECO:0000318"/>
    <property type="project" value="GO_Central"/>
</dbReference>
<dbReference type="GO" id="GO:0000902">
    <property type="term" value="P:cell morphogenesis"/>
    <property type="evidence" value="ECO:0000318"/>
    <property type="project" value="GO_Central"/>
</dbReference>
<dbReference type="GO" id="GO:0044331">
    <property type="term" value="P:cell-cell adhesion mediated by cadherin"/>
    <property type="evidence" value="ECO:0000318"/>
    <property type="project" value="GO_Central"/>
</dbReference>
<dbReference type="GO" id="GO:0007043">
    <property type="term" value="P:cell-cell junction assembly"/>
    <property type="evidence" value="ECO:0000318"/>
    <property type="project" value="GO_Central"/>
</dbReference>
<dbReference type="GO" id="GO:0007156">
    <property type="term" value="P:homophilic cell adhesion via plasma membrane adhesion molecules"/>
    <property type="evidence" value="ECO:0007669"/>
    <property type="project" value="InterPro"/>
</dbReference>
<dbReference type="CDD" id="cd11304">
    <property type="entry name" value="Cadherin_repeat"/>
    <property type="match status" value="4"/>
</dbReference>
<dbReference type="FunFam" id="2.60.40.60:FF:000011">
    <property type="entry name" value="Cadherin 1"/>
    <property type="match status" value="1"/>
</dbReference>
<dbReference type="FunFam" id="2.60.40.60:FF:000019">
    <property type="entry name" value="Cadherin 2"/>
    <property type="match status" value="1"/>
</dbReference>
<dbReference type="FunFam" id="2.60.40.60:FF:000022">
    <property type="entry name" value="Cadherin 2"/>
    <property type="match status" value="1"/>
</dbReference>
<dbReference type="FunFam" id="2.60.40.60:FF:000027">
    <property type="entry name" value="Cadherin 2"/>
    <property type="match status" value="1"/>
</dbReference>
<dbReference type="FunFam" id="2.60.40.60:FF:000045">
    <property type="entry name" value="Cadherin 2"/>
    <property type="match status" value="1"/>
</dbReference>
<dbReference type="FunFam" id="4.10.900.10:FF:000001">
    <property type="entry name" value="Cadherin 2"/>
    <property type="match status" value="1"/>
</dbReference>
<dbReference type="FunFam" id="2.60.40.60:FF:000287">
    <property type="entry name" value="Cadherin-4"/>
    <property type="match status" value="1"/>
</dbReference>
<dbReference type="Gene3D" id="2.60.40.60">
    <property type="entry name" value="Cadherins"/>
    <property type="match status" value="6"/>
</dbReference>
<dbReference type="Gene3D" id="4.10.900.10">
    <property type="entry name" value="TCF3-CBD (Catenin binding domain)"/>
    <property type="match status" value="1"/>
</dbReference>
<dbReference type="InterPro" id="IPR039808">
    <property type="entry name" value="Cadherin"/>
</dbReference>
<dbReference type="InterPro" id="IPR002126">
    <property type="entry name" value="Cadherin-like_dom"/>
</dbReference>
<dbReference type="InterPro" id="IPR015919">
    <property type="entry name" value="Cadherin-like_sf"/>
</dbReference>
<dbReference type="InterPro" id="IPR020894">
    <property type="entry name" value="Cadherin_CS"/>
</dbReference>
<dbReference type="InterPro" id="IPR014868">
    <property type="entry name" value="Cadherin_pro_dom"/>
</dbReference>
<dbReference type="InterPro" id="IPR000233">
    <property type="entry name" value="Cadherin_Y-type_LIR"/>
</dbReference>
<dbReference type="InterPro" id="IPR027397">
    <property type="entry name" value="Catenin-bd_sf"/>
</dbReference>
<dbReference type="PANTHER" id="PTHR24027">
    <property type="entry name" value="CADHERIN-23"/>
    <property type="match status" value="1"/>
</dbReference>
<dbReference type="PANTHER" id="PTHR24027:SF81">
    <property type="entry name" value="CADHERIN-4"/>
    <property type="match status" value="1"/>
</dbReference>
<dbReference type="Pfam" id="PF01049">
    <property type="entry name" value="CADH_Y-type_LIR"/>
    <property type="match status" value="1"/>
</dbReference>
<dbReference type="Pfam" id="PF00028">
    <property type="entry name" value="Cadherin"/>
    <property type="match status" value="5"/>
</dbReference>
<dbReference type="Pfam" id="PF08758">
    <property type="entry name" value="Cadherin_pro"/>
    <property type="match status" value="1"/>
</dbReference>
<dbReference type="PRINTS" id="PR00205">
    <property type="entry name" value="CADHERIN"/>
</dbReference>
<dbReference type="PRINTS" id="PR01820">
    <property type="entry name" value="DESMOCOLLIN"/>
</dbReference>
<dbReference type="SMART" id="SM00112">
    <property type="entry name" value="CA"/>
    <property type="match status" value="5"/>
</dbReference>
<dbReference type="SMART" id="SM01055">
    <property type="entry name" value="Cadherin_pro"/>
    <property type="match status" value="1"/>
</dbReference>
<dbReference type="SUPFAM" id="SSF49313">
    <property type="entry name" value="Cadherin-like"/>
    <property type="match status" value="6"/>
</dbReference>
<dbReference type="PROSITE" id="PS00232">
    <property type="entry name" value="CADHERIN_1"/>
    <property type="match status" value="3"/>
</dbReference>
<dbReference type="PROSITE" id="PS50268">
    <property type="entry name" value="CADHERIN_2"/>
    <property type="match status" value="5"/>
</dbReference>
<keyword id="KW-0106">Calcium</keyword>
<keyword id="KW-0130">Cell adhesion</keyword>
<keyword id="KW-1003">Cell membrane</keyword>
<keyword id="KW-0165">Cleavage on pair of basic residues</keyword>
<keyword id="KW-0325">Glycoprotein</keyword>
<keyword id="KW-0472">Membrane</keyword>
<keyword id="KW-0479">Metal-binding</keyword>
<keyword id="KW-1185">Reference proteome</keyword>
<keyword id="KW-0677">Repeat</keyword>
<keyword id="KW-0732">Signal</keyword>
<keyword id="KW-0812">Transmembrane</keyword>
<keyword id="KW-1133">Transmembrane helix</keyword>
<organism>
    <name type="scientific">Gallus gallus</name>
    <name type="common">Chicken</name>
    <dbReference type="NCBI Taxonomy" id="9031"/>
    <lineage>
        <taxon>Eukaryota</taxon>
        <taxon>Metazoa</taxon>
        <taxon>Chordata</taxon>
        <taxon>Craniata</taxon>
        <taxon>Vertebrata</taxon>
        <taxon>Euteleostomi</taxon>
        <taxon>Archelosauria</taxon>
        <taxon>Archosauria</taxon>
        <taxon>Dinosauria</taxon>
        <taxon>Saurischia</taxon>
        <taxon>Theropoda</taxon>
        <taxon>Coelurosauria</taxon>
        <taxon>Aves</taxon>
        <taxon>Neognathae</taxon>
        <taxon>Galloanserae</taxon>
        <taxon>Galliformes</taxon>
        <taxon>Phasianidae</taxon>
        <taxon>Phasianinae</taxon>
        <taxon>Gallus</taxon>
    </lineage>
</organism>
<feature type="signal peptide" evidence="2">
    <location>
        <begin position="1"/>
        <end position="19"/>
    </location>
</feature>
<feature type="propeptide" id="PRO_0000003753" evidence="2">
    <location>
        <begin position="20"/>
        <end position="166"/>
    </location>
</feature>
<feature type="chain" id="PRO_0000003754" description="Cadherin-4">
    <location>
        <begin position="167"/>
        <end position="913"/>
    </location>
</feature>
<feature type="topological domain" description="Extracellular" evidence="2">
    <location>
        <begin position="167"/>
        <end position="731"/>
    </location>
</feature>
<feature type="transmembrane region" description="Helical" evidence="2">
    <location>
        <begin position="732"/>
        <end position="753"/>
    </location>
</feature>
<feature type="topological domain" description="Cytoplasmic" evidence="2">
    <location>
        <begin position="754"/>
        <end position="913"/>
    </location>
</feature>
<feature type="domain" description="Cadherin 1" evidence="3">
    <location>
        <begin position="167"/>
        <end position="274"/>
    </location>
</feature>
<feature type="domain" description="Cadherin 2" evidence="3">
    <location>
        <begin position="275"/>
        <end position="389"/>
    </location>
</feature>
<feature type="domain" description="Cadherin 3" evidence="3">
    <location>
        <begin position="390"/>
        <end position="504"/>
    </location>
</feature>
<feature type="domain" description="Cadherin 4" evidence="3">
    <location>
        <begin position="505"/>
        <end position="610"/>
    </location>
</feature>
<feature type="domain" description="Cadherin 5" evidence="3">
    <location>
        <begin position="611"/>
        <end position="721"/>
    </location>
</feature>
<feature type="glycosylation site" description="N-linked (GlcNAc...) asparagine" evidence="2">
    <location>
        <position position="280"/>
    </location>
</feature>
<feature type="glycosylation site" description="N-linked (GlcNAc...) asparagine" evidence="2">
    <location>
        <position position="409"/>
    </location>
</feature>
<feature type="glycosylation site" description="N-linked (GlcNAc...) asparagine" evidence="2">
    <location>
        <position position="554"/>
    </location>
</feature>
<feature type="glycosylation site" description="N-linked (GlcNAc...) asparagine" evidence="2">
    <location>
        <position position="629"/>
    </location>
</feature>
<feature type="glycosylation site" description="N-linked (GlcNAc...) asparagine" evidence="2">
    <location>
        <position position="658"/>
    </location>
</feature>
<feature type="glycosylation site" description="N-linked (GlcNAc...) asparagine" evidence="2">
    <location>
        <position position="699"/>
    </location>
</feature>
<feature type="sequence variant" description="In one form.">
    <original>P</original>
    <variation>T</variation>
    <location>
        <position position="652"/>
    </location>
</feature>
<accession>P24503</accession>
<evidence type="ECO:0000250" key="1"/>
<evidence type="ECO:0000255" key="2"/>
<evidence type="ECO:0000255" key="3">
    <source>
        <dbReference type="PROSITE-ProRule" id="PRU00043"/>
    </source>
</evidence>
<comment type="function">
    <text>Cadherins are calcium-dependent cell adhesion proteins. They preferentially interact with themselves in a homophilic manner in connecting cells; cadherins may thus contribute to the sorting of heterogeneous cell types. May play an important role in retinal development.</text>
</comment>
<comment type="subcellular location">
    <subcellularLocation>
        <location>Cell membrane</location>
        <topology>Single-pass type I membrane protein</topology>
    </subcellularLocation>
</comment>
<comment type="tissue specificity">
    <text>Embryonic brain and neuronal retina.</text>
</comment>
<comment type="developmental stage">
    <text>Detected only after some degree of neuronal differentiation has taken place and persists at least up to the newly hatched stage.</text>
</comment>
<comment type="domain">
    <text evidence="1">Three calcium ions are usually bound at the interface of each cadherin domain and rigidify the connections, imparting a strong curvature to the full-length ectodomain.</text>
</comment>
<sequence>MRTGSRLLLVLLVWGSAAALNGDLTVRPTCKPGFSEEDYTAFVSQNIMEGQKLLKVKFNNCAGNKGVRYETNSLDFKVRADGTMYAVHQVQMASKQLILMVTAWDPQTLGRWEAIVRFLVGEKLQHNGHKPKGRKSGPVDLAQQQSDTLLPWRQHQSAKGLRRQKRDWVIPPINVPENSRGPFPQQLVRIRSDKDKEIHIRYSITGVGADQPPMEVFSIDPVSGRMYVTRPMDREERASYHLRAHAVDMNGNKVENPIDLYIYVIDMNDNRPEFINQVYNGSVDEGSKPGTYVMTVTANDADDSTTANGMVRYRIVTQTPQSPSQNMFTINSETGDIVTVAAGLDREKVQQYMVIVQATDMEGNLNYGLSNTATAIITVTDVNDNPPEFTTSTYSGEVPENRVEVVVANLTVMDRDQPHSPNWNAIYRIISGDPSGHFTIRTDPVTNEGMVTVVKAVDYEMNRAFMLTVMVSNQAPLASGIQMSFQSTAGVTISVTDVNEAPYFPTNHKLIRLEEGVPTGTVLTTFSAVDPDRFMQQAVRYSKLSDPANWLNINATNGQITTAAVLDRESDYIKNNVYEATFLAADNGIPPASGTGTLQIYLIDINDNAPELLPKEAQICEKPNLNVINITAADADIDPNVGPFVFELPSVPSAVRKNWTITRLNGDYAQLSLRIMYLEAGVYDVPIIVTDSGNPPLYNTSIIKVKVCPCDENGDCTTIGAVAAAGLGTGAIIAILICIIILLTMVLLFVVWMKRREKERHTKQLLIDPEDDVRDNILKYDEEGGGEEDQDYDLSQLQQPETMDHVLNKAPGVRRVDERPIGAEPQYPIRPVIPHPGDIGDFINEGLRAADNDPTAPPYDSLLVFDYEGSGSTAGSVSSLNSSSSGDQDYDYLNDWGPRFKKLADMYGGGEED</sequence>
<reference key="1">
    <citation type="journal article" date="1991" name="Neuron">
        <title>R-cadherin: a novel Ca(2+)-dependent cell-cell adhesion molecule expressed in the retina.</title>
        <authorList>
            <person name="Inuzuka H."/>
            <person name="Miyatani S."/>
            <person name="Takeichi M."/>
        </authorList>
    </citation>
    <scope>NUCLEOTIDE SEQUENCE [MRNA]</scope>
    <source>
        <tissue>Retina</tissue>
    </source>
</reference>
<proteinExistence type="evidence at transcript level"/>
<protein>
    <recommendedName>
        <fullName>Cadherin-4</fullName>
    </recommendedName>
    <alternativeName>
        <fullName>Retinal cadherin</fullName>
        <shortName>R-CAD</shortName>
        <shortName>R-cadherin</shortName>
    </alternativeName>
</protein>
<name>CADH4_CHICK</name>